<organism>
    <name type="scientific">Burkholderia ambifaria (strain MC40-6)</name>
    <dbReference type="NCBI Taxonomy" id="398577"/>
    <lineage>
        <taxon>Bacteria</taxon>
        <taxon>Pseudomonadati</taxon>
        <taxon>Pseudomonadota</taxon>
        <taxon>Betaproteobacteria</taxon>
        <taxon>Burkholderiales</taxon>
        <taxon>Burkholderiaceae</taxon>
        <taxon>Burkholderia</taxon>
        <taxon>Burkholderia cepacia complex</taxon>
    </lineage>
</organism>
<dbReference type="EMBL" id="CP001025">
    <property type="protein sequence ID" value="ACB62794.1"/>
    <property type="molecule type" value="Genomic_DNA"/>
</dbReference>
<dbReference type="RefSeq" id="WP_006752931.1">
    <property type="nucleotide sequence ID" value="NC_010551.1"/>
</dbReference>
<dbReference type="SMR" id="B1YRP6"/>
<dbReference type="GeneID" id="98107143"/>
<dbReference type="KEGG" id="bac:BamMC406_0293"/>
<dbReference type="HOGENOM" id="CLU_065898_2_2_4"/>
<dbReference type="OrthoDB" id="9809045at2"/>
<dbReference type="Proteomes" id="UP000001680">
    <property type="component" value="Chromosome 1"/>
</dbReference>
<dbReference type="GO" id="GO:0015935">
    <property type="term" value="C:small ribosomal subunit"/>
    <property type="evidence" value="ECO:0007669"/>
    <property type="project" value="InterPro"/>
</dbReference>
<dbReference type="GO" id="GO:0019843">
    <property type="term" value="F:rRNA binding"/>
    <property type="evidence" value="ECO:0007669"/>
    <property type="project" value="UniProtKB-UniRule"/>
</dbReference>
<dbReference type="GO" id="GO:0003735">
    <property type="term" value="F:structural constituent of ribosome"/>
    <property type="evidence" value="ECO:0007669"/>
    <property type="project" value="InterPro"/>
</dbReference>
<dbReference type="GO" id="GO:0006412">
    <property type="term" value="P:translation"/>
    <property type="evidence" value="ECO:0007669"/>
    <property type="project" value="UniProtKB-UniRule"/>
</dbReference>
<dbReference type="FunFam" id="3.30.160.20:FF:000001">
    <property type="entry name" value="30S ribosomal protein S5"/>
    <property type="match status" value="1"/>
</dbReference>
<dbReference type="FunFam" id="3.30.230.10:FF:000002">
    <property type="entry name" value="30S ribosomal protein S5"/>
    <property type="match status" value="1"/>
</dbReference>
<dbReference type="Gene3D" id="3.30.160.20">
    <property type="match status" value="1"/>
</dbReference>
<dbReference type="Gene3D" id="3.30.230.10">
    <property type="match status" value="1"/>
</dbReference>
<dbReference type="HAMAP" id="MF_01307_B">
    <property type="entry name" value="Ribosomal_uS5_B"/>
    <property type="match status" value="1"/>
</dbReference>
<dbReference type="InterPro" id="IPR020568">
    <property type="entry name" value="Ribosomal_Su5_D2-typ_SF"/>
</dbReference>
<dbReference type="InterPro" id="IPR000851">
    <property type="entry name" value="Ribosomal_uS5"/>
</dbReference>
<dbReference type="InterPro" id="IPR005712">
    <property type="entry name" value="Ribosomal_uS5_bac-type"/>
</dbReference>
<dbReference type="InterPro" id="IPR005324">
    <property type="entry name" value="Ribosomal_uS5_C"/>
</dbReference>
<dbReference type="InterPro" id="IPR013810">
    <property type="entry name" value="Ribosomal_uS5_N"/>
</dbReference>
<dbReference type="InterPro" id="IPR018192">
    <property type="entry name" value="Ribosomal_uS5_N_CS"/>
</dbReference>
<dbReference type="InterPro" id="IPR014721">
    <property type="entry name" value="Ribsml_uS5_D2-typ_fold_subgr"/>
</dbReference>
<dbReference type="NCBIfam" id="TIGR01021">
    <property type="entry name" value="rpsE_bact"/>
    <property type="match status" value="1"/>
</dbReference>
<dbReference type="PANTHER" id="PTHR48277">
    <property type="entry name" value="MITOCHONDRIAL RIBOSOMAL PROTEIN S5"/>
    <property type="match status" value="1"/>
</dbReference>
<dbReference type="PANTHER" id="PTHR48277:SF1">
    <property type="entry name" value="MITOCHONDRIAL RIBOSOMAL PROTEIN S5"/>
    <property type="match status" value="1"/>
</dbReference>
<dbReference type="Pfam" id="PF00333">
    <property type="entry name" value="Ribosomal_S5"/>
    <property type="match status" value="1"/>
</dbReference>
<dbReference type="Pfam" id="PF03719">
    <property type="entry name" value="Ribosomal_S5_C"/>
    <property type="match status" value="1"/>
</dbReference>
<dbReference type="SUPFAM" id="SSF54768">
    <property type="entry name" value="dsRNA-binding domain-like"/>
    <property type="match status" value="1"/>
</dbReference>
<dbReference type="SUPFAM" id="SSF54211">
    <property type="entry name" value="Ribosomal protein S5 domain 2-like"/>
    <property type="match status" value="1"/>
</dbReference>
<dbReference type="PROSITE" id="PS00585">
    <property type="entry name" value="RIBOSOMAL_S5"/>
    <property type="match status" value="1"/>
</dbReference>
<dbReference type="PROSITE" id="PS50881">
    <property type="entry name" value="S5_DSRBD"/>
    <property type="match status" value="1"/>
</dbReference>
<evidence type="ECO:0000255" key="1">
    <source>
        <dbReference type="HAMAP-Rule" id="MF_01307"/>
    </source>
</evidence>
<evidence type="ECO:0000305" key="2"/>
<proteinExistence type="inferred from homology"/>
<reference key="1">
    <citation type="submission" date="2008-04" db="EMBL/GenBank/DDBJ databases">
        <title>Complete sequence of chromosome 1 of Burkholderia ambifaria MC40-6.</title>
        <authorList>
            <person name="Copeland A."/>
            <person name="Lucas S."/>
            <person name="Lapidus A."/>
            <person name="Glavina del Rio T."/>
            <person name="Dalin E."/>
            <person name="Tice H."/>
            <person name="Pitluck S."/>
            <person name="Chain P."/>
            <person name="Malfatti S."/>
            <person name="Shin M."/>
            <person name="Vergez L."/>
            <person name="Lang D."/>
            <person name="Schmutz J."/>
            <person name="Larimer F."/>
            <person name="Land M."/>
            <person name="Hauser L."/>
            <person name="Kyrpides N."/>
            <person name="Lykidis A."/>
            <person name="Ramette A."/>
            <person name="Konstantinidis K."/>
            <person name="Tiedje J."/>
            <person name="Richardson P."/>
        </authorList>
    </citation>
    <scope>NUCLEOTIDE SEQUENCE [LARGE SCALE GENOMIC DNA]</scope>
    <source>
        <strain>MC40-6</strain>
    </source>
</reference>
<sequence>MAKMQAKVQADERDDGLREKMISVNRVTKVVKGGRILGFAALTVVGDGDGRIGMGKGKAKEVPVAVQKAMEQARRNMFKVPLKNGTLQHEVHGKHGASAVLLAPAKAGTGVIAGGPMRAVFDVMGVQNVVAKSHGSTNPYNLVRATLDGLRKQSTPADIAAKRGKSVEDILG</sequence>
<comment type="function">
    <text evidence="1">With S4 and S12 plays an important role in translational accuracy.</text>
</comment>
<comment type="function">
    <text evidence="1">Located at the back of the 30S subunit body where it stabilizes the conformation of the head with respect to the body.</text>
</comment>
<comment type="subunit">
    <text evidence="1">Part of the 30S ribosomal subunit. Contacts proteins S4 and S8.</text>
</comment>
<comment type="domain">
    <text>The N-terminal domain interacts with the head of the 30S subunit; the C-terminal domain interacts with the body and contacts protein S4. The interaction surface between S4 and S5 is involved in control of translational fidelity.</text>
</comment>
<comment type="similarity">
    <text evidence="1">Belongs to the universal ribosomal protein uS5 family.</text>
</comment>
<protein>
    <recommendedName>
        <fullName evidence="1">Small ribosomal subunit protein uS5</fullName>
    </recommendedName>
    <alternativeName>
        <fullName evidence="2">30S ribosomal protein S5</fullName>
    </alternativeName>
</protein>
<accession>B1YRP6</accession>
<gene>
    <name evidence="1" type="primary">rpsE</name>
    <name type="ordered locus">BamMC406_0293</name>
</gene>
<name>RS5_BURA4</name>
<keyword id="KW-0687">Ribonucleoprotein</keyword>
<keyword id="KW-0689">Ribosomal protein</keyword>
<keyword id="KW-0694">RNA-binding</keyword>
<keyword id="KW-0699">rRNA-binding</keyword>
<feature type="chain" id="PRO_1000140840" description="Small ribosomal subunit protein uS5">
    <location>
        <begin position="1"/>
        <end position="172"/>
    </location>
</feature>
<feature type="domain" description="S5 DRBM" evidence="1">
    <location>
        <begin position="17"/>
        <end position="80"/>
    </location>
</feature>